<protein>
    <recommendedName>
        <fullName>UPF0758 protein BTH_I0781</fullName>
    </recommendedName>
</protein>
<sequence>MQYEIVSAGENVGDEPERERPVAQAAAAPGIPRPAALPAAGAARRGRDLPRERLLARGPAALSDAELVALLLGSGLPGHDVFALAHTLLTRFGSLRALLDAAPDDFKGLRGIGPARTAILVAVVELARRALAEKARERPLVDSPGAVDDYLRLLIGTRPREVFVCLFLDARHRLVQTEETAHGSLTRMAVYPREIVRRALALNAAALIVAHNHPSGAVRPSAADRHLTRVLRDALALVDVQLIDHFVVGANDTFSFAQAGWI</sequence>
<dbReference type="EMBL" id="CP000086">
    <property type="protein sequence ID" value="ABC36992.1"/>
    <property type="molecule type" value="Genomic_DNA"/>
</dbReference>
<dbReference type="SMR" id="Q2T0G2"/>
<dbReference type="GeneID" id="45120540"/>
<dbReference type="KEGG" id="bte:BTH_I0781"/>
<dbReference type="HOGENOM" id="CLU_073529_0_1_4"/>
<dbReference type="Proteomes" id="UP000001930">
    <property type="component" value="Chromosome I"/>
</dbReference>
<dbReference type="GO" id="GO:0046872">
    <property type="term" value="F:metal ion binding"/>
    <property type="evidence" value="ECO:0007669"/>
    <property type="project" value="UniProtKB-KW"/>
</dbReference>
<dbReference type="GO" id="GO:0008237">
    <property type="term" value="F:metallopeptidase activity"/>
    <property type="evidence" value="ECO:0007669"/>
    <property type="project" value="UniProtKB-KW"/>
</dbReference>
<dbReference type="GO" id="GO:0006508">
    <property type="term" value="P:proteolysis"/>
    <property type="evidence" value="ECO:0007669"/>
    <property type="project" value="UniProtKB-KW"/>
</dbReference>
<dbReference type="CDD" id="cd08071">
    <property type="entry name" value="MPN_DUF2466"/>
    <property type="match status" value="1"/>
</dbReference>
<dbReference type="Gene3D" id="1.10.150.20">
    <property type="entry name" value="5' to 3' exonuclease, C-terminal subdomain"/>
    <property type="match status" value="1"/>
</dbReference>
<dbReference type="Gene3D" id="3.40.140.10">
    <property type="entry name" value="Cytidine Deaminase, domain 2"/>
    <property type="match status" value="1"/>
</dbReference>
<dbReference type="InterPro" id="IPR037518">
    <property type="entry name" value="MPN"/>
</dbReference>
<dbReference type="InterPro" id="IPR025657">
    <property type="entry name" value="RadC_JAB"/>
</dbReference>
<dbReference type="InterPro" id="IPR010994">
    <property type="entry name" value="RuvA_2-like"/>
</dbReference>
<dbReference type="InterPro" id="IPR001405">
    <property type="entry name" value="UPF0758"/>
</dbReference>
<dbReference type="InterPro" id="IPR020891">
    <property type="entry name" value="UPF0758_CS"/>
</dbReference>
<dbReference type="InterPro" id="IPR046778">
    <property type="entry name" value="UPF0758_N"/>
</dbReference>
<dbReference type="NCBIfam" id="NF000642">
    <property type="entry name" value="PRK00024.1"/>
    <property type="match status" value="1"/>
</dbReference>
<dbReference type="NCBIfam" id="TIGR00608">
    <property type="entry name" value="radc"/>
    <property type="match status" value="1"/>
</dbReference>
<dbReference type="PANTHER" id="PTHR30471">
    <property type="entry name" value="DNA REPAIR PROTEIN RADC"/>
    <property type="match status" value="1"/>
</dbReference>
<dbReference type="PANTHER" id="PTHR30471:SF3">
    <property type="entry name" value="UPF0758 PROTEIN YEES-RELATED"/>
    <property type="match status" value="1"/>
</dbReference>
<dbReference type="Pfam" id="PF04002">
    <property type="entry name" value="RadC"/>
    <property type="match status" value="1"/>
</dbReference>
<dbReference type="Pfam" id="PF20582">
    <property type="entry name" value="UPF0758_N"/>
    <property type="match status" value="1"/>
</dbReference>
<dbReference type="SUPFAM" id="SSF102712">
    <property type="entry name" value="JAB1/MPN domain"/>
    <property type="match status" value="1"/>
</dbReference>
<dbReference type="SUPFAM" id="SSF47781">
    <property type="entry name" value="RuvA domain 2-like"/>
    <property type="match status" value="1"/>
</dbReference>
<dbReference type="PROSITE" id="PS50249">
    <property type="entry name" value="MPN"/>
    <property type="match status" value="1"/>
</dbReference>
<dbReference type="PROSITE" id="PS01302">
    <property type="entry name" value="UPF0758"/>
    <property type="match status" value="1"/>
</dbReference>
<accession>Q2T0G2</accession>
<keyword id="KW-0378">Hydrolase</keyword>
<keyword id="KW-0479">Metal-binding</keyword>
<keyword id="KW-0482">Metalloprotease</keyword>
<keyword id="KW-0645">Protease</keyword>
<keyword id="KW-0862">Zinc</keyword>
<gene>
    <name type="ordered locus">BTH_I0781</name>
</gene>
<name>Y781_BURTA</name>
<organism>
    <name type="scientific">Burkholderia thailandensis (strain ATCC 700388 / DSM 13276 / CCUG 48851 / CIP 106301 / E264)</name>
    <dbReference type="NCBI Taxonomy" id="271848"/>
    <lineage>
        <taxon>Bacteria</taxon>
        <taxon>Pseudomonadati</taxon>
        <taxon>Pseudomonadota</taxon>
        <taxon>Betaproteobacteria</taxon>
        <taxon>Burkholderiales</taxon>
        <taxon>Burkholderiaceae</taxon>
        <taxon>Burkholderia</taxon>
        <taxon>pseudomallei group</taxon>
    </lineage>
</organism>
<proteinExistence type="inferred from homology"/>
<feature type="chain" id="PRO_0000322679" description="UPF0758 protein BTH_I0781">
    <location>
        <begin position="1"/>
        <end position="262"/>
    </location>
</feature>
<feature type="domain" description="MPN" evidence="1">
    <location>
        <begin position="140"/>
        <end position="262"/>
    </location>
</feature>
<feature type="region of interest" description="Disordered" evidence="2">
    <location>
        <begin position="1"/>
        <end position="45"/>
    </location>
</feature>
<feature type="short sequence motif" description="JAMM motif" evidence="1">
    <location>
        <begin position="211"/>
        <end position="224"/>
    </location>
</feature>
<feature type="compositionally biased region" description="Low complexity" evidence="2">
    <location>
        <begin position="22"/>
        <end position="43"/>
    </location>
</feature>
<feature type="binding site" evidence="1">
    <location>
        <position position="211"/>
    </location>
    <ligand>
        <name>Zn(2+)</name>
        <dbReference type="ChEBI" id="CHEBI:29105"/>
        <note>catalytic</note>
    </ligand>
</feature>
<feature type="binding site" evidence="1">
    <location>
        <position position="213"/>
    </location>
    <ligand>
        <name>Zn(2+)</name>
        <dbReference type="ChEBI" id="CHEBI:29105"/>
        <note>catalytic</note>
    </ligand>
</feature>
<feature type="binding site" evidence="1">
    <location>
        <position position="224"/>
    </location>
    <ligand>
        <name>Zn(2+)</name>
        <dbReference type="ChEBI" id="CHEBI:29105"/>
        <note>catalytic</note>
    </ligand>
</feature>
<reference key="1">
    <citation type="journal article" date="2005" name="BMC Genomics">
        <title>Bacterial genome adaptation to niches: divergence of the potential virulence genes in three Burkholderia species of different survival strategies.</title>
        <authorList>
            <person name="Kim H.S."/>
            <person name="Schell M.A."/>
            <person name="Yu Y."/>
            <person name="Ulrich R.L."/>
            <person name="Sarria S.H."/>
            <person name="Nierman W.C."/>
            <person name="DeShazer D."/>
        </authorList>
    </citation>
    <scope>NUCLEOTIDE SEQUENCE [LARGE SCALE GENOMIC DNA]</scope>
    <source>
        <strain>ATCC 700388 / DSM 13276 / CCUG 48851 / CIP 106301 / E264</strain>
    </source>
</reference>
<evidence type="ECO:0000255" key="1">
    <source>
        <dbReference type="PROSITE-ProRule" id="PRU01182"/>
    </source>
</evidence>
<evidence type="ECO:0000256" key="2">
    <source>
        <dbReference type="SAM" id="MobiDB-lite"/>
    </source>
</evidence>
<evidence type="ECO:0000305" key="3"/>
<comment type="similarity">
    <text evidence="3">Belongs to the UPF0758 family.</text>
</comment>